<keyword id="KW-0067">ATP-binding</keyword>
<keyword id="KW-0963">Cytoplasm</keyword>
<keyword id="KW-0436">Ligase</keyword>
<keyword id="KW-0547">Nucleotide-binding</keyword>
<keyword id="KW-0694">RNA-binding</keyword>
<keyword id="KW-0819">tRNA processing</keyword>
<keyword id="KW-0820">tRNA-binding</keyword>
<dbReference type="EC" id="6.3.4.-" evidence="1"/>
<dbReference type="EMBL" id="CP001407">
    <property type="protein sequence ID" value="ACO29867.1"/>
    <property type="molecule type" value="Genomic_DNA"/>
</dbReference>
<dbReference type="RefSeq" id="WP_001187913.1">
    <property type="nucleotide sequence ID" value="NZ_CP009318.1"/>
</dbReference>
<dbReference type="SMR" id="C1EPT9"/>
<dbReference type="KEGG" id="bcx:BCA_4029"/>
<dbReference type="PATRIC" id="fig|572264.18.peg.3982"/>
<dbReference type="Proteomes" id="UP000002210">
    <property type="component" value="Chromosome"/>
</dbReference>
<dbReference type="GO" id="GO:0005737">
    <property type="term" value="C:cytoplasm"/>
    <property type="evidence" value="ECO:0007669"/>
    <property type="project" value="UniProtKB-SubCell"/>
</dbReference>
<dbReference type="GO" id="GO:0005524">
    <property type="term" value="F:ATP binding"/>
    <property type="evidence" value="ECO:0007669"/>
    <property type="project" value="UniProtKB-KW"/>
</dbReference>
<dbReference type="GO" id="GO:0016879">
    <property type="term" value="F:ligase activity, forming carbon-nitrogen bonds"/>
    <property type="evidence" value="ECO:0007669"/>
    <property type="project" value="UniProtKB-UniRule"/>
</dbReference>
<dbReference type="GO" id="GO:0000049">
    <property type="term" value="F:tRNA binding"/>
    <property type="evidence" value="ECO:0007669"/>
    <property type="project" value="UniProtKB-KW"/>
</dbReference>
<dbReference type="GO" id="GO:0006400">
    <property type="term" value="P:tRNA modification"/>
    <property type="evidence" value="ECO:0007669"/>
    <property type="project" value="UniProtKB-UniRule"/>
</dbReference>
<dbReference type="Gene3D" id="3.40.50.620">
    <property type="entry name" value="HUPs"/>
    <property type="match status" value="1"/>
</dbReference>
<dbReference type="HAMAP" id="MF_01539">
    <property type="entry name" value="TmcAL"/>
    <property type="match status" value="1"/>
</dbReference>
<dbReference type="InterPro" id="IPR014729">
    <property type="entry name" value="Rossmann-like_a/b/a_fold"/>
</dbReference>
<dbReference type="InterPro" id="IPR008513">
    <property type="entry name" value="tRNA(Met)_cyd_acetate_ligase"/>
</dbReference>
<dbReference type="NCBIfam" id="NF010191">
    <property type="entry name" value="PRK13670.1"/>
    <property type="match status" value="1"/>
</dbReference>
<dbReference type="PANTHER" id="PTHR37825">
    <property type="entry name" value="TRNA(MET) CYTIDINE ACETATE LIGASE"/>
    <property type="match status" value="1"/>
</dbReference>
<dbReference type="PANTHER" id="PTHR37825:SF1">
    <property type="entry name" value="TRNA(MET) CYTIDINE ACETATE LIGASE"/>
    <property type="match status" value="1"/>
</dbReference>
<dbReference type="Pfam" id="PF05636">
    <property type="entry name" value="HIGH_NTase1"/>
    <property type="match status" value="1"/>
</dbReference>
<dbReference type="SUPFAM" id="SSF52374">
    <property type="entry name" value="Nucleotidylyl transferase"/>
    <property type="match status" value="1"/>
</dbReference>
<gene>
    <name evidence="1" type="primary">tmcAL</name>
    <name type="ordered locus">BCA_4029</name>
</gene>
<organism>
    <name type="scientific">Bacillus cereus (strain 03BB102)</name>
    <dbReference type="NCBI Taxonomy" id="572264"/>
    <lineage>
        <taxon>Bacteria</taxon>
        <taxon>Bacillati</taxon>
        <taxon>Bacillota</taxon>
        <taxon>Bacilli</taxon>
        <taxon>Bacillales</taxon>
        <taxon>Bacillaceae</taxon>
        <taxon>Bacillus</taxon>
        <taxon>Bacillus cereus group</taxon>
    </lineage>
</organism>
<reference key="1">
    <citation type="submission" date="2009-02" db="EMBL/GenBank/DDBJ databases">
        <title>Genome sequence of Bacillus cereus 03BB102.</title>
        <authorList>
            <person name="Dodson R.J."/>
            <person name="Jackson P."/>
            <person name="Munk A.C."/>
            <person name="Brettin T."/>
            <person name="Bruce D."/>
            <person name="Detter C."/>
            <person name="Tapia R."/>
            <person name="Han C."/>
            <person name="Sutton G."/>
            <person name="Sims D."/>
        </authorList>
    </citation>
    <scope>NUCLEOTIDE SEQUENCE [LARGE SCALE GENOMIC DNA]</scope>
    <source>
        <strain>03BB102</strain>
    </source>
</reference>
<name>TMCAL_BACC3</name>
<accession>C1EPT9</accession>
<comment type="function">
    <text evidence="1">Catalyzes the formation of N(4)-acetylcytidine (ac(4)C) at the wobble position of elongator tRNA(Met), using acetate and ATP as substrates. First activates an acetate ion to form acetyladenylate (Ac-AMP) and then transfers the acetyl group to tRNA to form ac(4)C34.</text>
</comment>
<comment type="catalytic activity">
    <reaction evidence="1">
        <text>cytidine(34) in elongator tRNA(Met) + acetate + ATP = N(4)-acetylcytidine(34) in elongator tRNA(Met) + AMP + diphosphate</text>
        <dbReference type="Rhea" id="RHEA:58144"/>
        <dbReference type="Rhea" id="RHEA-COMP:10693"/>
        <dbReference type="Rhea" id="RHEA-COMP:10694"/>
        <dbReference type="ChEBI" id="CHEBI:30089"/>
        <dbReference type="ChEBI" id="CHEBI:30616"/>
        <dbReference type="ChEBI" id="CHEBI:33019"/>
        <dbReference type="ChEBI" id="CHEBI:74900"/>
        <dbReference type="ChEBI" id="CHEBI:82748"/>
        <dbReference type="ChEBI" id="CHEBI:456215"/>
    </reaction>
</comment>
<comment type="subcellular location">
    <subcellularLocation>
        <location evidence="1">Cytoplasm</location>
    </subcellularLocation>
</comment>
<comment type="similarity">
    <text evidence="1">Belongs to the TmcAL family.</text>
</comment>
<evidence type="ECO:0000255" key="1">
    <source>
        <dbReference type="HAMAP-Rule" id="MF_01539"/>
    </source>
</evidence>
<protein>
    <recommendedName>
        <fullName evidence="1">tRNA(Met) cytidine acetate ligase</fullName>
        <ecNumber evidence="1">6.3.4.-</ecNumber>
    </recommendedName>
</protein>
<sequence length="393" mass="45327">MQQTKKLTHSDITIAVMSGPFLQRGEPALVSKWYRTKMALACGVDLVVELPYAFSTQKAETFANGAISILNALHVSEICFGSEDGQIENFYNTVSAQKNEEETFNRLVKQFMNAGNSYAKATSEAFLHILSSEKNIDMSQPNNILGFQYIKAILMQNSSMQAQTIKRFASHYHDETFNDQHIASATCIRKQLFSENSSFTEIESFIPKATASLLASYKQNYGTLHNWEQYFSFFKYKLMTMSPEDLRHIYEIEEGLEHRILSKIQTSSSFHLFMEALKTKRYTWTRLQRACTHILTNTTKEEIHCANIEQHAPYIRLLGMSQKGQTYLSKNKKKIELPILTHTKTFDHPTLHIERKANSVYFSIMKEPLRTQLLKRDATHHPIRYDETTAKFL</sequence>
<proteinExistence type="inferred from homology"/>
<feature type="chain" id="PRO_1000185215" description="tRNA(Met) cytidine acetate ligase">
    <location>
        <begin position="1"/>
        <end position="393"/>
    </location>
</feature>
<feature type="binding site" evidence="1">
    <location>
        <position position="81"/>
    </location>
    <ligand>
        <name>ATP</name>
        <dbReference type="ChEBI" id="CHEBI:30616"/>
    </ligand>
</feature>
<feature type="binding site" evidence="1">
    <location>
        <position position="142"/>
    </location>
    <ligand>
        <name>ATP</name>
        <dbReference type="ChEBI" id="CHEBI:30616"/>
    </ligand>
</feature>
<feature type="binding site" evidence="1">
    <location>
        <position position="167"/>
    </location>
    <ligand>
        <name>ATP</name>
        <dbReference type="ChEBI" id="CHEBI:30616"/>
    </ligand>
</feature>